<reference key="1">
    <citation type="journal article" date="2005" name="Nat. Biotechnol.">
        <title>Complete genome sequence of the plant commensal Pseudomonas fluorescens Pf-5.</title>
        <authorList>
            <person name="Paulsen I.T."/>
            <person name="Press C.M."/>
            <person name="Ravel J."/>
            <person name="Kobayashi D.Y."/>
            <person name="Myers G.S.A."/>
            <person name="Mavrodi D.V."/>
            <person name="DeBoy R.T."/>
            <person name="Seshadri R."/>
            <person name="Ren Q."/>
            <person name="Madupu R."/>
            <person name="Dodson R.J."/>
            <person name="Durkin A.S."/>
            <person name="Brinkac L.M."/>
            <person name="Daugherty S.C."/>
            <person name="Sullivan S.A."/>
            <person name="Rosovitz M.J."/>
            <person name="Gwinn M.L."/>
            <person name="Zhou L."/>
            <person name="Schneider D.J."/>
            <person name="Cartinhour S.W."/>
            <person name="Nelson W.C."/>
            <person name="Weidman J."/>
            <person name="Watkins K."/>
            <person name="Tran K."/>
            <person name="Khouri H."/>
            <person name="Pierson E.A."/>
            <person name="Pierson L.S. III"/>
            <person name="Thomashow L.S."/>
            <person name="Loper J.E."/>
        </authorList>
    </citation>
    <scope>NUCLEOTIDE SEQUENCE [LARGE SCALE GENOMIC DNA]</scope>
    <source>
        <strain>ATCC BAA-477 / NRRL B-23932 / Pf-5</strain>
    </source>
</reference>
<accession>Q4KID6</accession>
<sequence>MLLHIPGVFTRDEVGRIREALEQADWADGKITAGYQSAKAKHNLQLPEGHPLAQEIGAAMLDRLWQNPLFMSAALPHKVFPPLINCYTAGGSFDFHIDNAVRQPKGSPERVRTDLSSTLFFSDPEDYEGGELEIQDTFGLQRVKLPAGDMVLYPGTSLHKVNPVTRGARYASFFWTQSLVREDSQRALLFEMDGAIQELTRDVPDHPSLVRLTGTYHNLLRRWVEV</sequence>
<dbReference type="EC" id="1.14.11.-" evidence="1"/>
<dbReference type="EMBL" id="CP000076">
    <property type="protein sequence ID" value="AAY96262.1"/>
    <property type="molecule type" value="Genomic_DNA"/>
</dbReference>
<dbReference type="RefSeq" id="WP_011059221.1">
    <property type="nucleotide sequence ID" value="NC_004129.6"/>
</dbReference>
<dbReference type="SMR" id="Q4KID6"/>
<dbReference type="STRING" id="220664.PFL_0865"/>
<dbReference type="GeneID" id="57473867"/>
<dbReference type="KEGG" id="pfl:PFL_0865"/>
<dbReference type="PATRIC" id="fig|220664.5.peg.885"/>
<dbReference type="eggNOG" id="COG3128">
    <property type="taxonomic scope" value="Bacteria"/>
</dbReference>
<dbReference type="HOGENOM" id="CLU_106663_0_0_6"/>
<dbReference type="Proteomes" id="UP000008540">
    <property type="component" value="Chromosome"/>
</dbReference>
<dbReference type="GO" id="GO:0016706">
    <property type="term" value="F:2-oxoglutarate-dependent dioxygenase activity"/>
    <property type="evidence" value="ECO:0007669"/>
    <property type="project" value="UniProtKB-UniRule"/>
</dbReference>
<dbReference type="GO" id="GO:0005506">
    <property type="term" value="F:iron ion binding"/>
    <property type="evidence" value="ECO:0007669"/>
    <property type="project" value="UniProtKB-UniRule"/>
</dbReference>
<dbReference type="GO" id="GO:0031418">
    <property type="term" value="F:L-ascorbic acid binding"/>
    <property type="evidence" value="ECO:0007669"/>
    <property type="project" value="UniProtKB-KW"/>
</dbReference>
<dbReference type="GO" id="GO:0006974">
    <property type="term" value="P:DNA damage response"/>
    <property type="evidence" value="ECO:0007669"/>
    <property type="project" value="TreeGrafter"/>
</dbReference>
<dbReference type="GO" id="GO:0006879">
    <property type="term" value="P:intracellular iron ion homeostasis"/>
    <property type="evidence" value="ECO:0007669"/>
    <property type="project" value="TreeGrafter"/>
</dbReference>
<dbReference type="Gene3D" id="2.60.120.620">
    <property type="entry name" value="q2cbj1_9rhob like domain"/>
    <property type="match status" value="1"/>
</dbReference>
<dbReference type="Gene3D" id="4.10.860.20">
    <property type="entry name" value="Rabenosyn, Rab binding domain"/>
    <property type="match status" value="1"/>
</dbReference>
<dbReference type="HAMAP" id="MF_00657">
    <property type="entry name" value="Hydroxyl_YbiX"/>
    <property type="match status" value="1"/>
</dbReference>
<dbReference type="InterPro" id="IPR005123">
    <property type="entry name" value="Oxoglu/Fe-dep_dioxygenase_dom"/>
</dbReference>
<dbReference type="InterPro" id="IPR041097">
    <property type="entry name" value="PKHD_C"/>
</dbReference>
<dbReference type="InterPro" id="IPR023550">
    <property type="entry name" value="PKHD_hydroxylase"/>
</dbReference>
<dbReference type="InterPro" id="IPR006620">
    <property type="entry name" value="Pro_4_hyd_alph"/>
</dbReference>
<dbReference type="InterPro" id="IPR044862">
    <property type="entry name" value="Pro_4_hyd_alph_FE2OG_OXY"/>
</dbReference>
<dbReference type="NCBIfam" id="NF003974">
    <property type="entry name" value="PRK05467.1-3"/>
    <property type="match status" value="1"/>
</dbReference>
<dbReference type="NCBIfam" id="NF003975">
    <property type="entry name" value="PRK05467.1-4"/>
    <property type="match status" value="1"/>
</dbReference>
<dbReference type="PANTHER" id="PTHR41536">
    <property type="entry name" value="PKHD-TYPE HYDROXYLASE YBIX"/>
    <property type="match status" value="1"/>
</dbReference>
<dbReference type="PANTHER" id="PTHR41536:SF1">
    <property type="entry name" value="PKHD-TYPE HYDROXYLASE YBIX"/>
    <property type="match status" value="1"/>
</dbReference>
<dbReference type="Pfam" id="PF13640">
    <property type="entry name" value="2OG-FeII_Oxy_3"/>
    <property type="match status" value="1"/>
</dbReference>
<dbReference type="Pfam" id="PF18331">
    <property type="entry name" value="PKHD_C"/>
    <property type="match status" value="1"/>
</dbReference>
<dbReference type="SMART" id="SM00702">
    <property type="entry name" value="P4Hc"/>
    <property type="match status" value="1"/>
</dbReference>
<dbReference type="SUPFAM" id="SSF51197">
    <property type="entry name" value="Clavaminate synthase-like"/>
    <property type="match status" value="1"/>
</dbReference>
<dbReference type="PROSITE" id="PS51471">
    <property type="entry name" value="FE2OG_OXY"/>
    <property type="match status" value="1"/>
</dbReference>
<proteinExistence type="inferred from homology"/>
<comment type="cofactor">
    <cofactor evidence="1">
        <name>Fe(2+)</name>
        <dbReference type="ChEBI" id="CHEBI:29033"/>
    </cofactor>
    <text evidence="1">Binds 1 Fe(2+) ion per subunit.</text>
</comment>
<comment type="cofactor">
    <cofactor evidence="1">
        <name>L-ascorbate</name>
        <dbReference type="ChEBI" id="CHEBI:38290"/>
    </cofactor>
</comment>
<protein>
    <recommendedName>
        <fullName evidence="1">PKHD-type hydroxylase PFL_0865</fullName>
        <ecNumber evidence="1">1.14.11.-</ecNumber>
    </recommendedName>
</protein>
<name>Y865_PSEF5</name>
<evidence type="ECO:0000255" key="1">
    <source>
        <dbReference type="HAMAP-Rule" id="MF_00657"/>
    </source>
</evidence>
<organism>
    <name type="scientific">Pseudomonas fluorescens (strain ATCC BAA-477 / NRRL B-23932 / Pf-5)</name>
    <dbReference type="NCBI Taxonomy" id="220664"/>
    <lineage>
        <taxon>Bacteria</taxon>
        <taxon>Pseudomonadati</taxon>
        <taxon>Pseudomonadota</taxon>
        <taxon>Gammaproteobacteria</taxon>
        <taxon>Pseudomonadales</taxon>
        <taxon>Pseudomonadaceae</taxon>
        <taxon>Pseudomonas</taxon>
    </lineage>
</organism>
<keyword id="KW-0223">Dioxygenase</keyword>
<keyword id="KW-0408">Iron</keyword>
<keyword id="KW-0479">Metal-binding</keyword>
<keyword id="KW-0560">Oxidoreductase</keyword>
<keyword id="KW-0847">Vitamin C</keyword>
<feature type="chain" id="PRO_1000061730" description="PKHD-type hydroxylase PFL_0865">
    <location>
        <begin position="1"/>
        <end position="226"/>
    </location>
</feature>
<feature type="domain" description="Fe2OG dioxygenase" evidence="1">
    <location>
        <begin position="78"/>
        <end position="178"/>
    </location>
</feature>
<feature type="binding site" evidence="1">
    <location>
        <position position="96"/>
    </location>
    <ligand>
        <name>Fe cation</name>
        <dbReference type="ChEBI" id="CHEBI:24875"/>
    </ligand>
</feature>
<feature type="binding site" evidence="1">
    <location>
        <position position="98"/>
    </location>
    <ligand>
        <name>Fe cation</name>
        <dbReference type="ChEBI" id="CHEBI:24875"/>
    </ligand>
</feature>
<feature type="binding site" evidence="1">
    <location>
        <position position="159"/>
    </location>
    <ligand>
        <name>Fe cation</name>
        <dbReference type="ChEBI" id="CHEBI:24875"/>
    </ligand>
</feature>
<feature type="binding site" evidence="1">
    <location>
        <position position="169"/>
    </location>
    <ligand>
        <name>2-oxoglutarate</name>
        <dbReference type="ChEBI" id="CHEBI:16810"/>
    </ligand>
</feature>
<gene>
    <name type="ordered locus">PFL_0865</name>
</gene>